<dbReference type="EC" id="3.1.-.-" evidence="1"/>
<dbReference type="EMBL" id="CP000916">
    <property type="protein sequence ID" value="ACM23160.1"/>
    <property type="molecule type" value="Genomic_DNA"/>
</dbReference>
<dbReference type="RefSeq" id="WP_015919477.1">
    <property type="nucleotide sequence ID" value="NC_011978.1"/>
</dbReference>
<dbReference type="SMR" id="B9K877"/>
<dbReference type="STRING" id="309803.CTN_0984"/>
<dbReference type="KEGG" id="tna:CTN_0984"/>
<dbReference type="eggNOG" id="COG0319">
    <property type="taxonomic scope" value="Bacteria"/>
</dbReference>
<dbReference type="HOGENOM" id="CLU_106710_3_3_0"/>
<dbReference type="Proteomes" id="UP000000445">
    <property type="component" value="Chromosome"/>
</dbReference>
<dbReference type="GO" id="GO:0005737">
    <property type="term" value="C:cytoplasm"/>
    <property type="evidence" value="ECO:0007669"/>
    <property type="project" value="UniProtKB-SubCell"/>
</dbReference>
<dbReference type="GO" id="GO:0004222">
    <property type="term" value="F:metalloendopeptidase activity"/>
    <property type="evidence" value="ECO:0007669"/>
    <property type="project" value="InterPro"/>
</dbReference>
<dbReference type="GO" id="GO:0004521">
    <property type="term" value="F:RNA endonuclease activity"/>
    <property type="evidence" value="ECO:0007669"/>
    <property type="project" value="UniProtKB-UniRule"/>
</dbReference>
<dbReference type="GO" id="GO:0008270">
    <property type="term" value="F:zinc ion binding"/>
    <property type="evidence" value="ECO:0007669"/>
    <property type="project" value="UniProtKB-UniRule"/>
</dbReference>
<dbReference type="GO" id="GO:0006364">
    <property type="term" value="P:rRNA processing"/>
    <property type="evidence" value="ECO:0007669"/>
    <property type="project" value="UniProtKB-UniRule"/>
</dbReference>
<dbReference type="Gene3D" id="3.40.390.30">
    <property type="entry name" value="Metalloproteases ('zincins'), catalytic domain"/>
    <property type="match status" value="1"/>
</dbReference>
<dbReference type="HAMAP" id="MF_00009">
    <property type="entry name" value="Endoribonucl_YbeY"/>
    <property type="match status" value="1"/>
</dbReference>
<dbReference type="InterPro" id="IPR023091">
    <property type="entry name" value="MetalPrtase_cat_dom_sf_prd"/>
</dbReference>
<dbReference type="InterPro" id="IPR002036">
    <property type="entry name" value="YbeY"/>
</dbReference>
<dbReference type="InterPro" id="IPR020549">
    <property type="entry name" value="YbeY_CS"/>
</dbReference>
<dbReference type="NCBIfam" id="TIGR00043">
    <property type="entry name" value="rRNA maturation RNase YbeY"/>
    <property type="match status" value="1"/>
</dbReference>
<dbReference type="PANTHER" id="PTHR46986">
    <property type="entry name" value="ENDORIBONUCLEASE YBEY, CHLOROPLASTIC"/>
    <property type="match status" value="1"/>
</dbReference>
<dbReference type="PANTHER" id="PTHR46986:SF1">
    <property type="entry name" value="ENDORIBONUCLEASE YBEY, CHLOROPLASTIC"/>
    <property type="match status" value="1"/>
</dbReference>
<dbReference type="Pfam" id="PF02130">
    <property type="entry name" value="YbeY"/>
    <property type="match status" value="1"/>
</dbReference>
<dbReference type="SUPFAM" id="SSF55486">
    <property type="entry name" value="Metalloproteases ('zincins'), catalytic domain"/>
    <property type="match status" value="1"/>
</dbReference>
<dbReference type="PROSITE" id="PS01306">
    <property type="entry name" value="UPF0054"/>
    <property type="match status" value="1"/>
</dbReference>
<organism>
    <name type="scientific">Thermotoga neapolitana (strain ATCC 49049 / DSM 4359 / NBRC 107923 / NS-E)</name>
    <dbReference type="NCBI Taxonomy" id="309803"/>
    <lineage>
        <taxon>Bacteria</taxon>
        <taxon>Thermotogati</taxon>
        <taxon>Thermotogota</taxon>
        <taxon>Thermotogae</taxon>
        <taxon>Thermotogales</taxon>
        <taxon>Thermotogaceae</taxon>
        <taxon>Thermotoga</taxon>
    </lineage>
</organism>
<gene>
    <name evidence="1" type="primary">ybeY</name>
    <name type="ordered locus">CTN_0984</name>
</gene>
<evidence type="ECO:0000255" key="1">
    <source>
        <dbReference type="HAMAP-Rule" id="MF_00009"/>
    </source>
</evidence>
<proteinExistence type="inferred from homology"/>
<sequence length="149" mass="17227">MIKILGEGKGKEILKSLSEKLDEIVKKEIGNVNTNVILVSKDQIKEMNREFRGEDFPTDVLTFPLFEEVYGEIYICPEVVEENAKEYNNTFEKELIEVVIHGILHLAGYDHEFEDKNAKEMFEKQHIYVEEVWNEWRSSLSGGTGQEGT</sequence>
<reference key="1">
    <citation type="submission" date="2007-11" db="EMBL/GenBank/DDBJ databases">
        <title>The genome sequence of the hyperthermophilic bacterium Thermotoga neapolitana.</title>
        <authorList>
            <person name="Lim S.K."/>
            <person name="Kim J.S."/>
            <person name="Cha S.H."/>
            <person name="Park B.C."/>
            <person name="Lee D.S."/>
            <person name="Tae H.S."/>
            <person name="Kim S.-J."/>
            <person name="Kim J.J."/>
            <person name="Park K.J."/>
            <person name="Lee S.Y."/>
        </authorList>
    </citation>
    <scope>NUCLEOTIDE SEQUENCE [LARGE SCALE GENOMIC DNA]</scope>
    <source>
        <strain>ATCC 49049 / DSM 4359 / NBRC 107923 / NS-E</strain>
    </source>
</reference>
<comment type="function">
    <text evidence="1">Single strand-specific metallo-endoribonuclease involved in late-stage 70S ribosome quality control and in maturation of the 3' terminus of the 16S rRNA.</text>
</comment>
<comment type="cofactor">
    <cofactor evidence="1">
        <name>Zn(2+)</name>
        <dbReference type="ChEBI" id="CHEBI:29105"/>
    </cofactor>
    <text evidence="1">Binds 1 zinc ion.</text>
</comment>
<comment type="subcellular location">
    <subcellularLocation>
        <location evidence="1">Cytoplasm</location>
    </subcellularLocation>
</comment>
<comment type="similarity">
    <text evidence="1">Belongs to the endoribonuclease YbeY family.</text>
</comment>
<name>YBEY_THENN</name>
<feature type="chain" id="PRO_1000200004" description="Endoribonuclease YbeY">
    <location>
        <begin position="1"/>
        <end position="149"/>
    </location>
</feature>
<feature type="binding site" evidence="1">
    <location>
        <position position="101"/>
    </location>
    <ligand>
        <name>Zn(2+)</name>
        <dbReference type="ChEBI" id="CHEBI:29105"/>
        <note>catalytic</note>
    </ligand>
</feature>
<feature type="binding site" evidence="1">
    <location>
        <position position="105"/>
    </location>
    <ligand>
        <name>Zn(2+)</name>
        <dbReference type="ChEBI" id="CHEBI:29105"/>
        <note>catalytic</note>
    </ligand>
</feature>
<feature type="binding site" evidence="1">
    <location>
        <position position="111"/>
    </location>
    <ligand>
        <name>Zn(2+)</name>
        <dbReference type="ChEBI" id="CHEBI:29105"/>
        <note>catalytic</note>
    </ligand>
</feature>
<keyword id="KW-0963">Cytoplasm</keyword>
<keyword id="KW-0255">Endonuclease</keyword>
<keyword id="KW-0378">Hydrolase</keyword>
<keyword id="KW-0479">Metal-binding</keyword>
<keyword id="KW-0540">Nuclease</keyword>
<keyword id="KW-0690">Ribosome biogenesis</keyword>
<keyword id="KW-0698">rRNA processing</keyword>
<keyword id="KW-0862">Zinc</keyword>
<accession>B9K877</accession>
<protein>
    <recommendedName>
        <fullName evidence="1">Endoribonuclease YbeY</fullName>
        <ecNumber evidence="1">3.1.-.-</ecNumber>
    </recommendedName>
</protein>